<sequence length="491" mass="57218">MIIETNHACDLVIFGAKGDLTKRKLLPALYKLEKSKKIHKYTRIIASGRADWSTEDYIEKIKTEVKNFLNEEINDLIWKNLSSRIFFCNIDVHEPLHFFRLKTILKQKKNIIVYYCAVPSNTLNSIFIGLGNAHLNSVPSRIVLEKPLGVCLKTSKKINDQISKYFLESQIFRIDHYLGKESILNLFALRFSNTCLFYNWNNKTIDHIQITVSEEVGIEDRWNYFNMMGQMKDMVQNHLLQILTILTMDQPKNISSESIQHEKVKILRSLNPINIHNINKKTVRGQYCSGVINEKKVPSYLEENGANKNSLTETFVAIKVDLNNKQWSGVPFYLRTGKRLAHKYSEIVVFFKKKPTNLFKNLNSELLQNKLIIRLEPNPNIIFDFSVKAPGLEQEYKIENSQLKSSQFSKKYSKNSIDAYERLLFEIMRGVQSLFVCRDEIEAAWKWIDPIIHAWKNSKNNAPQLYMSGTWGPKNSDLLLAHDGRVWYEFH</sequence>
<protein>
    <recommendedName>
        <fullName evidence="1">Glucose-6-phosphate 1-dehydrogenase</fullName>
        <shortName evidence="1">G6PD</shortName>
        <ecNumber evidence="1">1.1.1.49</ecNumber>
    </recommendedName>
</protein>
<accession>P57405</accession>
<comment type="function">
    <text evidence="1">Catalyzes the oxidation of glucose 6-phosphate to 6-phosphogluconolactone.</text>
</comment>
<comment type="catalytic activity">
    <reaction evidence="1">
        <text>D-glucose 6-phosphate + NADP(+) = 6-phospho-D-glucono-1,5-lactone + NADPH + H(+)</text>
        <dbReference type="Rhea" id="RHEA:15841"/>
        <dbReference type="ChEBI" id="CHEBI:15378"/>
        <dbReference type="ChEBI" id="CHEBI:57783"/>
        <dbReference type="ChEBI" id="CHEBI:57955"/>
        <dbReference type="ChEBI" id="CHEBI:58349"/>
        <dbReference type="ChEBI" id="CHEBI:61548"/>
        <dbReference type="EC" id="1.1.1.49"/>
    </reaction>
</comment>
<comment type="pathway">
    <text evidence="1">Carbohydrate degradation; pentose phosphate pathway; D-ribulose 5-phosphate from D-glucose 6-phosphate (oxidative stage): step 1/3.</text>
</comment>
<comment type="similarity">
    <text evidence="1">Belongs to the glucose-6-phosphate dehydrogenase family.</text>
</comment>
<organism>
    <name type="scientific">Buchnera aphidicola subsp. Acyrthosiphon pisum (strain APS)</name>
    <name type="common">Acyrthosiphon pisum symbiotic bacterium</name>
    <dbReference type="NCBI Taxonomy" id="107806"/>
    <lineage>
        <taxon>Bacteria</taxon>
        <taxon>Pseudomonadati</taxon>
        <taxon>Pseudomonadota</taxon>
        <taxon>Gammaproteobacteria</taxon>
        <taxon>Enterobacterales</taxon>
        <taxon>Erwiniaceae</taxon>
        <taxon>Buchnera</taxon>
    </lineage>
</organism>
<proteinExistence type="inferred from homology"/>
<reference key="1">
    <citation type="journal article" date="2000" name="Nature">
        <title>Genome sequence of the endocellular bacterial symbiont of aphids Buchnera sp. APS.</title>
        <authorList>
            <person name="Shigenobu S."/>
            <person name="Watanabe H."/>
            <person name="Hattori M."/>
            <person name="Sakaki Y."/>
            <person name="Ishikawa H."/>
        </authorList>
    </citation>
    <scope>NUCLEOTIDE SEQUENCE [LARGE SCALE GENOMIC DNA]</scope>
    <source>
        <strain>APS</strain>
    </source>
</reference>
<feature type="chain" id="PRO_0000068112" description="Glucose-6-phosphate 1-dehydrogenase">
    <location>
        <begin position="1"/>
        <end position="491"/>
    </location>
</feature>
<feature type="active site" description="Proton acceptor" evidence="1">
    <location>
        <position position="238"/>
    </location>
</feature>
<feature type="binding site" evidence="1">
    <location>
        <position position="49"/>
    </location>
    <ligand>
        <name>NADP(+)</name>
        <dbReference type="ChEBI" id="CHEBI:58349"/>
    </ligand>
</feature>
<feature type="binding site" evidence="1">
    <location>
        <begin position="91"/>
        <end position="92"/>
    </location>
    <ligand>
        <name>NADP(+)</name>
        <dbReference type="ChEBI" id="CHEBI:58349"/>
    </ligand>
</feature>
<feature type="binding site" evidence="1">
    <location>
        <position position="146"/>
    </location>
    <ligand>
        <name>NADP(+)</name>
        <dbReference type="ChEBI" id="CHEBI:58349"/>
    </ligand>
</feature>
<feature type="binding site" evidence="1">
    <location>
        <position position="176"/>
    </location>
    <ligand>
        <name>substrate</name>
    </ligand>
</feature>
<feature type="binding site" evidence="1">
    <location>
        <position position="180"/>
    </location>
    <ligand>
        <name>substrate</name>
    </ligand>
</feature>
<feature type="binding site" evidence="1">
    <location>
        <position position="214"/>
    </location>
    <ligand>
        <name>substrate</name>
    </ligand>
</feature>
<feature type="binding site" evidence="1">
    <location>
        <position position="233"/>
    </location>
    <ligand>
        <name>substrate</name>
    </ligand>
</feature>
<feature type="binding site" evidence="1">
    <location>
        <position position="338"/>
    </location>
    <ligand>
        <name>substrate</name>
    </ligand>
</feature>
<feature type="binding site" evidence="1">
    <location>
        <position position="343"/>
    </location>
    <ligand>
        <name>substrate</name>
    </ligand>
</feature>
<evidence type="ECO:0000255" key="1">
    <source>
        <dbReference type="HAMAP-Rule" id="MF_00966"/>
    </source>
</evidence>
<name>G6PD_BUCAI</name>
<keyword id="KW-0119">Carbohydrate metabolism</keyword>
<keyword id="KW-0313">Glucose metabolism</keyword>
<keyword id="KW-0521">NADP</keyword>
<keyword id="KW-0560">Oxidoreductase</keyword>
<keyword id="KW-1185">Reference proteome</keyword>
<gene>
    <name evidence="1" type="primary">zwf</name>
    <name type="ordered locus">BU320</name>
</gene>
<dbReference type="EC" id="1.1.1.49" evidence="1"/>
<dbReference type="EMBL" id="BA000003">
    <property type="protein sequence ID" value="BAB13028.1"/>
    <property type="molecule type" value="Genomic_DNA"/>
</dbReference>
<dbReference type="RefSeq" id="NP_240142.1">
    <property type="nucleotide sequence ID" value="NC_002528.1"/>
</dbReference>
<dbReference type="RefSeq" id="WP_010896065.1">
    <property type="nucleotide sequence ID" value="NC_002528.1"/>
</dbReference>
<dbReference type="SMR" id="P57405"/>
<dbReference type="STRING" id="563178.BUAP5A_313"/>
<dbReference type="EnsemblBacteria" id="BAB13028">
    <property type="protein sequence ID" value="BAB13028"/>
    <property type="gene ID" value="BAB13028"/>
</dbReference>
<dbReference type="KEGG" id="buc:BU320"/>
<dbReference type="PATRIC" id="fig|107806.10.peg.332"/>
<dbReference type="eggNOG" id="COG0364">
    <property type="taxonomic scope" value="Bacteria"/>
</dbReference>
<dbReference type="HOGENOM" id="CLU_013524_5_0_6"/>
<dbReference type="UniPathway" id="UPA00115">
    <property type="reaction ID" value="UER00408"/>
</dbReference>
<dbReference type="Proteomes" id="UP000001806">
    <property type="component" value="Chromosome"/>
</dbReference>
<dbReference type="GO" id="GO:0005829">
    <property type="term" value="C:cytosol"/>
    <property type="evidence" value="ECO:0007669"/>
    <property type="project" value="TreeGrafter"/>
</dbReference>
<dbReference type="GO" id="GO:0004345">
    <property type="term" value="F:glucose-6-phosphate dehydrogenase activity"/>
    <property type="evidence" value="ECO:0007669"/>
    <property type="project" value="UniProtKB-UniRule"/>
</dbReference>
<dbReference type="GO" id="GO:0050661">
    <property type="term" value="F:NADP binding"/>
    <property type="evidence" value="ECO:0007669"/>
    <property type="project" value="UniProtKB-UniRule"/>
</dbReference>
<dbReference type="GO" id="GO:0006006">
    <property type="term" value="P:glucose metabolic process"/>
    <property type="evidence" value="ECO:0007669"/>
    <property type="project" value="UniProtKB-KW"/>
</dbReference>
<dbReference type="GO" id="GO:0009051">
    <property type="term" value="P:pentose-phosphate shunt, oxidative branch"/>
    <property type="evidence" value="ECO:0007669"/>
    <property type="project" value="TreeGrafter"/>
</dbReference>
<dbReference type="Gene3D" id="3.30.360.10">
    <property type="entry name" value="Dihydrodipicolinate Reductase, domain 2"/>
    <property type="match status" value="1"/>
</dbReference>
<dbReference type="Gene3D" id="3.40.50.720">
    <property type="entry name" value="NAD(P)-binding Rossmann-like Domain"/>
    <property type="match status" value="1"/>
</dbReference>
<dbReference type="HAMAP" id="MF_00966">
    <property type="entry name" value="G6PD"/>
    <property type="match status" value="1"/>
</dbReference>
<dbReference type="InterPro" id="IPR001282">
    <property type="entry name" value="G6P_DH"/>
</dbReference>
<dbReference type="InterPro" id="IPR019796">
    <property type="entry name" value="G6P_DH_AS"/>
</dbReference>
<dbReference type="InterPro" id="IPR022675">
    <property type="entry name" value="G6P_DH_C"/>
</dbReference>
<dbReference type="InterPro" id="IPR022674">
    <property type="entry name" value="G6P_DH_NAD-bd"/>
</dbReference>
<dbReference type="InterPro" id="IPR036291">
    <property type="entry name" value="NAD(P)-bd_dom_sf"/>
</dbReference>
<dbReference type="NCBIfam" id="TIGR00871">
    <property type="entry name" value="zwf"/>
    <property type="match status" value="1"/>
</dbReference>
<dbReference type="PANTHER" id="PTHR23429:SF0">
    <property type="entry name" value="GLUCOSE-6-PHOSPHATE 1-DEHYDROGENASE"/>
    <property type="match status" value="1"/>
</dbReference>
<dbReference type="PANTHER" id="PTHR23429">
    <property type="entry name" value="GLUCOSE-6-PHOSPHATE 1-DEHYDROGENASE G6PD"/>
    <property type="match status" value="1"/>
</dbReference>
<dbReference type="Pfam" id="PF02781">
    <property type="entry name" value="G6PD_C"/>
    <property type="match status" value="1"/>
</dbReference>
<dbReference type="Pfam" id="PF00479">
    <property type="entry name" value="G6PD_N"/>
    <property type="match status" value="1"/>
</dbReference>
<dbReference type="PIRSF" id="PIRSF000110">
    <property type="entry name" value="G6PD"/>
    <property type="match status" value="1"/>
</dbReference>
<dbReference type="PRINTS" id="PR00079">
    <property type="entry name" value="G6PDHDRGNASE"/>
</dbReference>
<dbReference type="SUPFAM" id="SSF55347">
    <property type="entry name" value="Glyceraldehyde-3-phosphate dehydrogenase-like, C-terminal domain"/>
    <property type="match status" value="1"/>
</dbReference>
<dbReference type="SUPFAM" id="SSF51735">
    <property type="entry name" value="NAD(P)-binding Rossmann-fold domains"/>
    <property type="match status" value="1"/>
</dbReference>
<dbReference type="PROSITE" id="PS00069">
    <property type="entry name" value="G6P_DEHYDROGENASE"/>
    <property type="match status" value="1"/>
</dbReference>